<feature type="chain" id="PRO_0000067768" description="DNA-directed RNA polymerase subunit beta'">
    <location>
        <begin position="1"/>
        <end position="1391"/>
    </location>
</feature>
<feature type="binding site" evidence="1">
    <location>
        <position position="72"/>
    </location>
    <ligand>
        <name>Zn(2+)</name>
        <dbReference type="ChEBI" id="CHEBI:29105"/>
        <label>1</label>
    </ligand>
</feature>
<feature type="binding site" evidence="1">
    <location>
        <position position="74"/>
    </location>
    <ligand>
        <name>Zn(2+)</name>
        <dbReference type="ChEBI" id="CHEBI:29105"/>
        <label>1</label>
    </ligand>
</feature>
<feature type="binding site" evidence="1">
    <location>
        <position position="87"/>
    </location>
    <ligand>
        <name>Zn(2+)</name>
        <dbReference type="ChEBI" id="CHEBI:29105"/>
        <label>1</label>
    </ligand>
</feature>
<feature type="binding site" evidence="1">
    <location>
        <position position="90"/>
    </location>
    <ligand>
        <name>Zn(2+)</name>
        <dbReference type="ChEBI" id="CHEBI:29105"/>
        <label>1</label>
    </ligand>
</feature>
<feature type="binding site" evidence="1">
    <location>
        <position position="462"/>
    </location>
    <ligand>
        <name>Mg(2+)</name>
        <dbReference type="ChEBI" id="CHEBI:18420"/>
    </ligand>
</feature>
<feature type="binding site" evidence="1">
    <location>
        <position position="464"/>
    </location>
    <ligand>
        <name>Mg(2+)</name>
        <dbReference type="ChEBI" id="CHEBI:18420"/>
    </ligand>
</feature>
<feature type="binding site" evidence="1">
    <location>
        <position position="466"/>
    </location>
    <ligand>
        <name>Mg(2+)</name>
        <dbReference type="ChEBI" id="CHEBI:18420"/>
    </ligand>
</feature>
<feature type="binding site" evidence="1">
    <location>
        <position position="816"/>
    </location>
    <ligand>
        <name>Zn(2+)</name>
        <dbReference type="ChEBI" id="CHEBI:29105"/>
        <label>2</label>
    </ligand>
</feature>
<feature type="binding site" evidence="1">
    <location>
        <position position="890"/>
    </location>
    <ligand>
        <name>Zn(2+)</name>
        <dbReference type="ChEBI" id="CHEBI:29105"/>
        <label>2</label>
    </ligand>
</feature>
<feature type="binding site" evidence="1">
    <location>
        <position position="897"/>
    </location>
    <ligand>
        <name>Zn(2+)</name>
        <dbReference type="ChEBI" id="CHEBI:29105"/>
        <label>2</label>
    </ligand>
</feature>
<feature type="binding site" evidence="1">
    <location>
        <position position="900"/>
    </location>
    <ligand>
        <name>Zn(2+)</name>
        <dbReference type="ChEBI" id="CHEBI:29105"/>
        <label>2</label>
    </ligand>
</feature>
<protein>
    <recommendedName>
        <fullName evidence="1">DNA-directed RNA polymerase subunit beta'</fullName>
        <shortName evidence="1">RNAP subunit beta'</shortName>
        <ecNumber evidence="1">2.7.7.6</ecNumber>
    </recommendedName>
    <alternativeName>
        <fullName evidence="1">RNA polymerase subunit beta'</fullName>
    </alternativeName>
    <alternativeName>
        <fullName evidence="1">Transcriptase subunit beta'</fullName>
    </alternativeName>
</protein>
<gene>
    <name evidence="1" type="primary">rpoC</name>
    <name type="ordered locus">NMB0133</name>
</gene>
<comment type="function">
    <text evidence="1">DNA-dependent RNA polymerase catalyzes the transcription of DNA into RNA using the four ribonucleoside triphosphates as substrates.</text>
</comment>
<comment type="catalytic activity">
    <reaction evidence="1">
        <text>RNA(n) + a ribonucleoside 5'-triphosphate = RNA(n+1) + diphosphate</text>
        <dbReference type="Rhea" id="RHEA:21248"/>
        <dbReference type="Rhea" id="RHEA-COMP:14527"/>
        <dbReference type="Rhea" id="RHEA-COMP:17342"/>
        <dbReference type="ChEBI" id="CHEBI:33019"/>
        <dbReference type="ChEBI" id="CHEBI:61557"/>
        <dbReference type="ChEBI" id="CHEBI:140395"/>
        <dbReference type="EC" id="2.7.7.6"/>
    </reaction>
</comment>
<comment type="cofactor">
    <cofactor evidence="1">
        <name>Mg(2+)</name>
        <dbReference type="ChEBI" id="CHEBI:18420"/>
    </cofactor>
    <text evidence="1">Binds 1 Mg(2+) ion per subunit.</text>
</comment>
<comment type="cofactor">
    <cofactor evidence="1">
        <name>Zn(2+)</name>
        <dbReference type="ChEBI" id="CHEBI:29105"/>
    </cofactor>
    <text evidence="1">Binds 2 Zn(2+) ions per subunit.</text>
</comment>
<comment type="subunit">
    <text evidence="1">The RNAP catalytic core consists of 2 alpha, 1 beta, 1 beta' and 1 omega subunit. When a sigma factor is associated with the core the holoenzyme is formed, which can initiate transcription.</text>
</comment>
<comment type="similarity">
    <text evidence="1">Belongs to the RNA polymerase beta' chain family.</text>
</comment>
<evidence type="ECO:0000255" key="1">
    <source>
        <dbReference type="HAMAP-Rule" id="MF_01322"/>
    </source>
</evidence>
<accession>Q9K1J1</accession>
<name>RPOC_NEIMB</name>
<reference key="1">
    <citation type="journal article" date="2000" name="Science">
        <title>Complete genome sequence of Neisseria meningitidis serogroup B strain MC58.</title>
        <authorList>
            <person name="Tettelin H."/>
            <person name="Saunders N.J."/>
            <person name="Heidelberg J.F."/>
            <person name="Jeffries A.C."/>
            <person name="Nelson K.E."/>
            <person name="Eisen J.A."/>
            <person name="Ketchum K.A."/>
            <person name="Hood D.W."/>
            <person name="Peden J.F."/>
            <person name="Dodson R.J."/>
            <person name="Nelson W.C."/>
            <person name="Gwinn M.L."/>
            <person name="DeBoy R.T."/>
            <person name="Peterson J.D."/>
            <person name="Hickey E.K."/>
            <person name="Haft D.H."/>
            <person name="Salzberg S.L."/>
            <person name="White O."/>
            <person name="Fleischmann R.D."/>
            <person name="Dougherty B.A."/>
            <person name="Mason T.M."/>
            <person name="Ciecko A."/>
            <person name="Parksey D.S."/>
            <person name="Blair E."/>
            <person name="Cittone H."/>
            <person name="Clark E.B."/>
            <person name="Cotton M.D."/>
            <person name="Utterback T.R."/>
            <person name="Khouri H.M."/>
            <person name="Qin H."/>
            <person name="Vamathevan J.J."/>
            <person name="Gill J."/>
            <person name="Scarlato V."/>
            <person name="Masignani V."/>
            <person name="Pizza M."/>
            <person name="Grandi G."/>
            <person name="Sun L."/>
            <person name="Smith H.O."/>
            <person name="Fraser C.M."/>
            <person name="Moxon E.R."/>
            <person name="Rappuoli R."/>
            <person name="Venter J.C."/>
        </authorList>
    </citation>
    <scope>NUCLEOTIDE SEQUENCE [LARGE SCALE GENOMIC DNA]</scope>
    <source>
        <strain>ATCC BAA-335 / MC58</strain>
    </source>
</reference>
<keyword id="KW-0240">DNA-directed RNA polymerase</keyword>
<keyword id="KW-0460">Magnesium</keyword>
<keyword id="KW-0479">Metal-binding</keyword>
<keyword id="KW-0548">Nucleotidyltransferase</keyword>
<keyword id="KW-1185">Reference proteome</keyword>
<keyword id="KW-0804">Transcription</keyword>
<keyword id="KW-0808">Transferase</keyword>
<keyword id="KW-0862">Zinc</keyword>
<proteinExistence type="inferred from homology"/>
<dbReference type="EC" id="2.7.7.6" evidence="1"/>
<dbReference type="EMBL" id="AE002098">
    <property type="protein sequence ID" value="AAF40592.1"/>
    <property type="molecule type" value="Genomic_DNA"/>
</dbReference>
<dbReference type="PIR" id="F81233">
    <property type="entry name" value="F81233"/>
</dbReference>
<dbReference type="RefSeq" id="NP_273191.1">
    <property type="nucleotide sequence ID" value="NC_003112.2"/>
</dbReference>
<dbReference type="RefSeq" id="WP_002218564.1">
    <property type="nucleotide sequence ID" value="NC_003112.2"/>
</dbReference>
<dbReference type="SMR" id="Q9K1J1"/>
<dbReference type="FunCoup" id="Q9K1J1">
    <property type="interactions" value="518"/>
</dbReference>
<dbReference type="STRING" id="122586.NMB0133"/>
<dbReference type="PaxDb" id="122586-NMB0133"/>
<dbReference type="KEGG" id="nme:NMB0133"/>
<dbReference type="PATRIC" id="fig|122586.8.peg.173"/>
<dbReference type="HOGENOM" id="CLU_000524_3_1_4"/>
<dbReference type="InParanoid" id="Q9K1J1"/>
<dbReference type="OrthoDB" id="9815296at2"/>
<dbReference type="Proteomes" id="UP000000425">
    <property type="component" value="Chromosome"/>
</dbReference>
<dbReference type="GO" id="GO:0000428">
    <property type="term" value="C:DNA-directed RNA polymerase complex"/>
    <property type="evidence" value="ECO:0007669"/>
    <property type="project" value="UniProtKB-KW"/>
</dbReference>
<dbReference type="GO" id="GO:0003677">
    <property type="term" value="F:DNA binding"/>
    <property type="evidence" value="ECO:0007669"/>
    <property type="project" value="UniProtKB-UniRule"/>
</dbReference>
<dbReference type="GO" id="GO:0003899">
    <property type="term" value="F:DNA-directed RNA polymerase activity"/>
    <property type="evidence" value="ECO:0007669"/>
    <property type="project" value="UniProtKB-UniRule"/>
</dbReference>
<dbReference type="GO" id="GO:0000287">
    <property type="term" value="F:magnesium ion binding"/>
    <property type="evidence" value="ECO:0007669"/>
    <property type="project" value="UniProtKB-UniRule"/>
</dbReference>
<dbReference type="GO" id="GO:0008270">
    <property type="term" value="F:zinc ion binding"/>
    <property type="evidence" value="ECO:0007669"/>
    <property type="project" value="UniProtKB-UniRule"/>
</dbReference>
<dbReference type="GO" id="GO:0006351">
    <property type="term" value="P:DNA-templated transcription"/>
    <property type="evidence" value="ECO:0007669"/>
    <property type="project" value="UniProtKB-UniRule"/>
</dbReference>
<dbReference type="CDD" id="cd02655">
    <property type="entry name" value="RNAP_beta'_C"/>
    <property type="match status" value="1"/>
</dbReference>
<dbReference type="CDD" id="cd01609">
    <property type="entry name" value="RNAP_beta'_N"/>
    <property type="match status" value="1"/>
</dbReference>
<dbReference type="FunFam" id="1.10.132.30:FF:000003">
    <property type="entry name" value="DNA-directed RNA polymerase subunit beta"/>
    <property type="match status" value="1"/>
</dbReference>
<dbReference type="FunFam" id="1.10.150.390:FF:000002">
    <property type="entry name" value="DNA-directed RNA polymerase subunit beta"/>
    <property type="match status" value="1"/>
</dbReference>
<dbReference type="FunFam" id="4.10.860.120:FF:000001">
    <property type="entry name" value="DNA-directed RNA polymerase subunit beta"/>
    <property type="match status" value="1"/>
</dbReference>
<dbReference type="Gene3D" id="1.10.132.30">
    <property type="match status" value="1"/>
</dbReference>
<dbReference type="Gene3D" id="1.10.150.390">
    <property type="match status" value="1"/>
</dbReference>
<dbReference type="Gene3D" id="1.10.1790.20">
    <property type="match status" value="1"/>
</dbReference>
<dbReference type="Gene3D" id="1.10.40.90">
    <property type="match status" value="1"/>
</dbReference>
<dbReference type="Gene3D" id="2.40.40.20">
    <property type="match status" value="1"/>
</dbReference>
<dbReference type="Gene3D" id="2.40.50.100">
    <property type="match status" value="3"/>
</dbReference>
<dbReference type="Gene3D" id="4.10.860.120">
    <property type="entry name" value="RNA polymerase II, clamp domain"/>
    <property type="match status" value="1"/>
</dbReference>
<dbReference type="Gene3D" id="1.10.274.100">
    <property type="entry name" value="RNA polymerase Rpb1, domain 3"/>
    <property type="match status" value="1"/>
</dbReference>
<dbReference type="HAMAP" id="MF_01322">
    <property type="entry name" value="RNApol_bact_RpoC"/>
    <property type="match status" value="1"/>
</dbReference>
<dbReference type="InterPro" id="IPR045867">
    <property type="entry name" value="DNA-dir_RpoC_beta_prime"/>
</dbReference>
<dbReference type="InterPro" id="IPR012754">
    <property type="entry name" value="DNA-dir_RpoC_beta_prime_bact"/>
</dbReference>
<dbReference type="InterPro" id="IPR000722">
    <property type="entry name" value="RNA_pol_asu"/>
</dbReference>
<dbReference type="InterPro" id="IPR006592">
    <property type="entry name" value="RNA_pol_N"/>
</dbReference>
<dbReference type="InterPro" id="IPR007080">
    <property type="entry name" value="RNA_pol_Rpb1_1"/>
</dbReference>
<dbReference type="InterPro" id="IPR007066">
    <property type="entry name" value="RNA_pol_Rpb1_3"/>
</dbReference>
<dbReference type="InterPro" id="IPR042102">
    <property type="entry name" value="RNA_pol_Rpb1_3_sf"/>
</dbReference>
<dbReference type="InterPro" id="IPR007083">
    <property type="entry name" value="RNA_pol_Rpb1_4"/>
</dbReference>
<dbReference type="InterPro" id="IPR007081">
    <property type="entry name" value="RNA_pol_Rpb1_5"/>
</dbReference>
<dbReference type="InterPro" id="IPR044893">
    <property type="entry name" value="RNA_pol_Rpb1_clamp_domain"/>
</dbReference>
<dbReference type="InterPro" id="IPR038120">
    <property type="entry name" value="Rpb1_funnel_sf"/>
</dbReference>
<dbReference type="NCBIfam" id="TIGR02386">
    <property type="entry name" value="rpoC_TIGR"/>
    <property type="match status" value="1"/>
</dbReference>
<dbReference type="PANTHER" id="PTHR19376">
    <property type="entry name" value="DNA-DIRECTED RNA POLYMERASE"/>
    <property type="match status" value="1"/>
</dbReference>
<dbReference type="PANTHER" id="PTHR19376:SF54">
    <property type="entry name" value="DNA-DIRECTED RNA POLYMERASE SUBUNIT BETA"/>
    <property type="match status" value="1"/>
</dbReference>
<dbReference type="Pfam" id="PF04997">
    <property type="entry name" value="RNA_pol_Rpb1_1"/>
    <property type="match status" value="1"/>
</dbReference>
<dbReference type="Pfam" id="PF00623">
    <property type="entry name" value="RNA_pol_Rpb1_2"/>
    <property type="match status" value="2"/>
</dbReference>
<dbReference type="Pfam" id="PF04983">
    <property type="entry name" value="RNA_pol_Rpb1_3"/>
    <property type="match status" value="1"/>
</dbReference>
<dbReference type="Pfam" id="PF05000">
    <property type="entry name" value="RNA_pol_Rpb1_4"/>
    <property type="match status" value="1"/>
</dbReference>
<dbReference type="Pfam" id="PF04998">
    <property type="entry name" value="RNA_pol_Rpb1_5"/>
    <property type="match status" value="1"/>
</dbReference>
<dbReference type="SMART" id="SM00663">
    <property type="entry name" value="RPOLA_N"/>
    <property type="match status" value="1"/>
</dbReference>
<dbReference type="SUPFAM" id="SSF64484">
    <property type="entry name" value="beta and beta-prime subunits of DNA dependent RNA-polymerase"/>
    <property type="match status" value="1"/>
</dbReference>
<sequence length="1391" mass="153762">MNLLNLFNPLQTAGMEEEFDAIKIGIASPETIRSWSYGEVKKPETINYRTFKPERDGLFCAKIFGPVKDYECLCGKYKRLKFKGVTCEKCGVEVTLSKVRRERMGHIELAAPVAHIWFLKSLPSRLGMVLDMTLRDIERVLYFEAFVVTDPGMTPLQRRQLLTEDDYYNKLDEYGDDFDAKMGAEGIRELLRTLNVAGEIEILRQELESTGSDTKIKKIAKRLKVLEAFHRSGMKLEWMIMDVLPVLPPDLRPLVPLDGGRFATSDLNDLYRRVINRNNRLKRLLELHAPDIIVRNEKRMLQEAVDSLLDNGRRGKAMTGANKRPLKSLADMIKGKGGRFRQNLLGKRVDYSGRSVITVGPYLRLHQCGLPKKMALELFKPFIFHKLEKQGLASTVKAAKKLVEQEVPEVWDILEEVIREHPIMLNRAPTLHRLGIQAFEPILIEGKAIQLHPLVCAAFNADFDGDQMAVHVPLSLEAQMEARTLMLASNNVLSPANGEPIIVPSQDIVLGLYYMTRDRINAKGEGSLFADVKEVHRAYHTKQVELGTKITVRLREWVKNEAGEFEPVVNRYETTVGRALLSEILPKGLPFEYVNKALKKKEISKLINASFRLCGLRDTVIFADHLMYTGFGFAAKGGISIAVDDMEIPKEKAALLAEANAEVKEIEDQYRQGLVTNGERYNKVVDIWGRAGDKIAKAMMDNLSKQKVIDRAGNEVDQESFNSIYMMADSGARGSAAQIKQLSGMRGLMAKPDGSIIETPITSNFREGLTVLQYFIATHGARKGLADTALKTANSGYLTRRLVDVTQDLVVVEDDCGTSDGFVMKAVVQGGDVIEALRDRILGRVTASDVVDPSSGETLVEAGTLLTEKLVDMIDQSGVDEVKVRTPITCKTRHGLCAHCYGRDLARGKLVNAGEAVGVIAAQSIGEPGTQLTMRTFHIGGAASRAAAASQVEAKSNGTARFSSQMRYVANNKGELVVIGRSCEVVIHDDIGRERERHKVPYGAILLVQDGMAIKAGQTLATWDPHTRPMITEHAGMVKFENVEEGVTVAKQTDDVTGLSTLVVIDGKRRSSSASKLLRPTVKLLDENGVEICIPGTSTPVSMAFPVGAVITVREGQEIGKGDVLARIPQASSKTRDITGGLPRVAELFEARVPKDAGMLAEITGTVSFGKETKGKQRLIVTDVDGVAYETLISKEKQILVHDGQVVNRGETIVDGAVDPHDILRLQGIEALARYIVQEVQEVYRLQGVKISDKHIEVIIRQMLRRVNIADAGETGFITGEQVERGDVMAANEKALEEGKEPARYENVLLGITKASLSTDSFISAASFQETTRVLTEAAIMGKQDELRGLKENVIVGRLIPAGTGLTYHRSRHQQWQEVEQETAETQVTDE</sequence>
<organism>
    <name type="scientific">Neisseria meningitidis serogroup B (strain ATCC BAA-335 / MC58)</name>
    <dbReference type="NCBI Taxonomy" id="122586"/>
    <lineage>
        <taxon>Bacteria</taxon>
        <taxon>Pseudomonadati</taxon>
        <taxon>Pseudomonadota</taxon>
        <taxon>Betaproteobacteria</taxon>
        <taxon>Neisseriales</taxon>
        <taxon>Neisseriaceae</taxon>
        <taxon>Neisseria</taxon>
    </lineage>
</organism>